<accession>B2UXU9</accession>
<dbReference type="EMBL" id="CP001078">
    <property type="protein sequence ID" value="ACD53886.1"/>
    <property type="molecule type" value="Genomic_DNA"/>
</dbReference>
<dbReference type="RefSeq" id="WP_003371947.1">
    <property type="nucleotide sequence ID" value="NC_010723.1"/>
</dbReference>
<dbReference type="SMR" id="B2UXU9"/>
<dbReference type="KEGG" id="cbt:CLH_0170"/>
<dbReference type="HOGENOM" id="CLU_101379_2_1_9"/>
<dbReference type="GO" id="GO:0003677">
    <property type="term" value="F:DNA binding"/>
    <property type="evidence" value="ECO:0007669"/>
    <property type="project" value="UniProtKB-UniRule"/>
</dbReference>
<dbReference type="GO" id="GO:0070063">
    <property type="term" value="F:RNA polymerase binding"/>
    <property type="evidence" value="ECO:0007669"/>
    <property type="project" value="InterPro"/>
</dbReference>
<dbReference type="GO" id="GO:0006354">
    <property type="term" value="P:DNA-templated transcription elongation"/>
    <property type="evidence" value="ECO:0007669"/>
    <property type="project" value="TreeGrafter"/>
</dbReference>
<dbReference type="GO" id="GO:0032784">
    <property type="term" value="P:regulation of DNA-templated transcription elongation"/>
    <property type="evidence" value="ECO:0007669"/>
    <property type="project" value="UniProtKB-UniRule"/>
</dbReference>
<dbReference type="FunFam" id="1.10.287.180:FF:000001">
    <property type="entry name" value="Transcription elongation factor GreA"/>
    <property type="match status" value="1"/>
</dbReference>
<dbReference type="FunFam" id="3.10.50.30:FF:000001">
    <property type="entry name" value="Transcription elongation factor GreA"/>
    <property type="match status" value="1"/>
</dbReference>
<dbReference type="Gene3D" id="3.10.50.30">
    <property type="entry name" value="Transcription elongation factor, GreA/GreB, C-terminal domain"/>
    <property type="match status" value="1"/>
</dbReference>
<dbReference type="Gene3D" id="1.10.287.180">
    <property type="entry name" value="Transcription elongation factor, GreA/GreB, N-terminal domain"/>
    <property type="match status" value="1"/>
</dbReference>
<dbReference type="HAMAP" id="MF_00105">
    <property type="entry name" value="GreA_GreB"/>
    <property type="match status" value="1"/>
</dbReference>
<dbReference type="InterPro" id="IPR036953">
    <property type="entry name" value="GreA/GreB_C_sf"/>
</dbReference>
<dbReference type="InterPro" id="IPR018151">
    <property type="entry name" value="TF_GreA/GreB_CS"/>
</dbReference>
<dbReference type="InterPro" id="IPR006359">
    <property type="entry name" value="Tscrpt_elong_fac_GreA"/>
</dbReference>
<dbReference type="InterPro" id="IPR028624">
    <property type="entry name" value="Tscrpt_elong_fac_GreA/B"/>
</dbReference>
<dbReference type="InterPro" id="IPR001437">
    <property type="entry name" value="Tscrpt_elong_fac_GreA/B_C"/>
</dbReference>
<dbReference type="InterPro" id="IPR023459">
    <property type="entry name" value="Tscrpt_elong_fac_GreA/B_fam"/>
</dbReference>
<dbReference type="InterPro" id="IPR022691">
    <property type="entry name" value="Tscrpt_elong_fac_GreA/B_N"/>
</dbReference>
<dbReference type="InterPro" id="IPR036805">
    <property type="entry name" value="Tscrpt_elong_fac_GreA/B_N_sf"/>
</dbReference>
<dbReference type="NCBIfam" id="TIGR01462">
    <property type="entry name" value="greA"/>
    <property type="match status" value="1"/>
</dbReference>
<dbReference type="NCBIfam" id="NF001263">
    <property type="entry name" value="PRK00226.1-4"/>
    <property type="match status" value="1"/>
</dbReference>
<dbReference type="PANTHER" id="PTHR30437">
    <property type="entry name" value="TRANSCRIPTION ELONGATION FACTOR GREA"/>
    <property type="match status" value="1"/>
</dbReference>
<dbReference type="PANTHER" id="PTHR30437:SF4">
    <property type="entry name" value="TRANSCRIPTION ELONGATION FACTOR GREA"/>
    <property type="match status" value="1"/>
</dbReference>
<dbReference type="Pfam" id="PF01272">
    <property type="entry name" value="GreA_GreB"/>
    <property type="match status" value="1"/>
</dbReference>
<dbReference type="Pfam" id="PF03449">
    <property type="entry name" value="GreA_GreB_N"/>
    <property type="match status" value="1"/>
</dbReference>
<dbReference type="PIRSF" id="PIRSF006092">
    <property type="entry name" value="GreA_GreB"/>
    <property type="match status" value="1"/>
</dbReference>
<dbReference type="SUPFAM" id="SSF54534">
    <property type="entry name" value="FKBP-like"/>
    <property type="match status" value="1"/>
</dbReference>
<dbReference type="SUPFAM" id="SSF46557">
    <property type="entry name" value="GreA transcript cleavage protein, N-terminal domain"/>
    <property type="match status" value="1"/>
</dbReference>
<dbReference type="PROSITE" id="PS00829">
    <property type="entry name" value="GREAB_1"/>
    <property type="match status" value="1"/>
</dbReference>
<dbReference type="PROSITE" id="PS00830">
    <property type="entry name" value="GREAB_2"/>
    <property type="match status" value="1"/>
</dbReference>
<reference key="1">
    <citation type="submission" date="2008-05" db="EMBL/GenBank/DDBJ databases">
        <title>Complete genome sequence of Clostridium botulinum E3 str. Alaska E43.</title>
        <authorList>
            <person name="Brinkac L.M."/>
            <person name="Brown J.L."/>
            <person name="Bruce D."/>
            <person name="Detter C."/>
            <person name="Munk C."/>
            <person name="Smith L.A."/>
            <person name="Smith T.J."/>
            <person name="Sutton G."/>
            <person name="Brettin T.S."/>
        </authorList>
    </citation>
    <scope>NUCLEOTIDE SEQUENCE [LARGE SCALE GENOMIC DNA]</scope>
    <source>
        <strain>Alaska E43 / Type E3</strain>
    </source>
</reference>
<gene>
    <name evidence="1" type="primary">greA</name>
    <name type="ordered locus">CLH_0170</name>
</gene>
<keyword id="KW-0175">Coiled coil</keyword>
<keyword id="KW-0238">DNA-binding</keyword>
<keyword id="KW-0804">Transcription</keyword>
<keyword id="KW-0805">Transcription regulation</keyword>
<evidence type="ECO:0000255" key="1">
    <source>
        <dbReference type="HAMAP-Rule" id="MF_00105"/>
    </source>
</evidence>
<name>GREA_CLOBA</name>
<proteinExistence type="inferred from homology"/>
<organism>
    <name type="scientific">Clostridium botulinum (strain Alaska E43 / Type E3)</name>
    <dbReference type="NCBI Taxonomy" id="508767"/>
    <lineage>
        <taxon>Bacteria</taxon>
        <taxon>Bacillati</taxon>
        <taxon>Bacillota</taxon>
        <taxon>Clostridia</taxon>
        <taxon>Eubacteriales</taxon>
        <taxon>Clostridiaceae</taxon>
        <taxon>Clostridium</taxon>
    </lineage>
</organism>
<sequence>MSEPKQYVMTYEGVKKLEGELEYLKTVKRKEITEKIKVALGYGDLSENSEYDEAKNDQAFTEGKILQLENKLKNAVVVDESEIPKDIVSVGSKVKVKDYDFDEEVEYSIVGSAEADPMSFKISNESPVGKALVGKKIGDIVDVVVPDGISKFEILDIQRG</sequence>
<protein>
    <recommendedName>
        <fullName evidence="1">Transcription elongation factor GreA</fullName>
    </recommendedName>
    <alternativeName>
        <fullName evidence="1">Transcript cleavage factor GreA</fullName>
    </alternativeName>
</protein>
<comment type="function">
    <text evidence="1">Necessary for efficient RNA polymerase transcription elongation past template-encoded arresting sites. The arresting sites in DNA have the property of trapping a certain fraction of elongating RNA polymerases that pass through, resulting in locked ternary complexes. Cleavage of the nascent transcript by cleavage factors such as GreA or GreB allows the resumption of elongation from the new 3'terminus. GreA releases sequences of 2 to 3 nucleotides.</text>
</comment>
<comment type="similarity">
    <text evidence="1">Belongs to the GreA/GreB family.</text>
</comment>
<feature type="chain" id="PRO_1000094160" description="Transcription elongation factor GreA">
    <location>
        <begin position="1"/>
        <end position="160"/>
    </location>
</feature>
<feature type="coiled-coil region" evidence="1">
    <location>
        <begin position="49"/>
        <end position="75"/>
    </location>
</feature>